<keyword id="KW-0067">ATP-binding</keyword>
<keyword id="KW-0418">Kinase</keyword>
<keyword id="KW-0460">Magnesium</keyword>
<keyword id="KW-0479">Metal-binding</keyword>
<keyword id="KW-0547">Nucleotide-binding</keyword>
<keyword id="KW-0784">Thiamine biosynthesis</keyword>
<keyword id="KW-0808">Transferase</keyword>
<reference key="1">
    <citation type="journal article" date="2005" name="J. Bacteriol.">
        <title>Whole-genome sequencing of Staphylococcus haemolyticus uncovers the extreme plasticity of its genome and the evolution of human-colonizing staphylococcal species.</title>
        <authorList>
            <person name="Takeuchi F."/>
            <person name="Watanabe S."/>
            <person name="Baba T."/>
            <person name="Yuzawa H."/>
            <person name="Ito T."/>
            <person name="Morimoto Y."/>
            <person name="Kuroda M."/>
            <person name="Cui L."/>
            <person name="Takahashi M."/>
            <person name="Ankai A."/>
            <person name="Baba S."/>
            <person name="Fukui S."/>
            <person name="Lee J.C."/>
            <person name="Hiramatsu K."/>
        </authorList>
    </citation>
    <scope>NUCLEOTIDE SEQUENCE [LARGE SCALE GENOMIC DNA]</scope>
    <source>
        <strain>JCSC1435</strain>
    </source>
</reference>
<evidence type="ECO:0000255" key="1">
    <source>
        <dbReference type="HAMAP-Rule" id="MF_00228"/>
    </source>
</evidence>
<proteinExistence type="inferred from homology"/>
<gene>
    <name evidence="1" type="primary">thiM</name>
    <name type="ordered locus">SH0942</name>
</gene>
<organism>
    <name type="scientific">Staphylococcus haemolyticus (strain JCSC1435)</name>
    <dbReference type="NCBI Taxonomy" id="279808"/>
    <lineage>
        <taxon>Bacteria</taxon>
        <taxon>Bacillati</taxon>
        <taxon>Bacillota</taxon>
        <taxon>Bacilli</taxon>
        <taxon>Bacillales</taxon>
        <taxon>Staphylococcaceae</taxon>
        <taxon>Staphylococcus</taxon>
    </lineage>
</organism>
<accession>Q4L7X4</accession>
<dbReference type="EC" id="2.7.1.50" evidence="1"/>
<dbReference type="EMBL" id="AP006716">
    <property type="protein sequence ID" value="BAE04251.1"/>
    <property type="molecule type" value="Genomic_DNA"/>
</dbReference>
<dbReference type="RefSeq" id="WP_011275253.1">
    <property type="nucleotide sequence ID" value="NC_007168.1"/>
</dbReference>
<dbReference type="SMR" id="Q4L7X4"/>
<dbReference type="GeneID" id="93780330"/>
<dbReference type="KEGG" id="sha:SH0942"/>
<dbReference type="eggNOG" id="COG2145">
    <property type="taxonomic scope" value="Bacteria"/>
</dbReference>
<dbReference type="HOGENOM" id="CLU_019943_0_2_9"/>
<dbReference type="OrthoDB" id="9778146at2"/>
<dbReference type="UniPathway" id="UPA00060">
    <property type="reaction ID" value="UER00139"/>
</dbReference>
<dbReference type="Proteomes" id="UP000000543">
    <property type="component" value="Chromosome"/>
</dbReference>
<dbReference type="GO" id="GO:0005524">
    <property type="term" value="F:ATP binding"/>
    <property type="evidence" value="ECO:0007669"/>
    <property type="project" value="UniProtKB-UniRule"/>
</dbReference>
<dbReference type="GO" id="GO:0004417">
    <property type="term" value="F:hydroxyethylthiazole kinase activity"/>
    <property type="evidence" value="ECO:0007669"/>
    <property type="project" value="UniProtKB-UniRule"/>
</dbReference>
<dbReference type="GO" id="GO:0000287">
    <property type="term" value="F:magnesium ion binding"/>
    <property type="evidence" value="ECO:0007669"/>
    <property type="project" value="UniProtKB-UniRule"/>
</dbReference>
<dbReference type="GO" id="GO:0009228">
    <property type="term" value="P:thiamine biosynthetic process"/>
    <property type="evidence" value="ECO:0007669"/>
    <property type="project" value="UniProtKB-KW"/>
</dbReference>
<dbReference type="GO" id="GO:0009229">
    <property type="term" value="P:thiamine diphosphate biosynthetic process"/>
    <property type="evidence" value="ECO:0007669"/>
    <property type="project" value="UniProtKB-UniRule"/>
</dbReference>
<dbReference type="CDD" id="cd01170">
    <property type="entry name" value="THZ_kinase"/>
    <property type="match status" value="1"/>
</dbReference>
<dbReference type="Gene3D" id="3.40.1190.20">
    <property type="match status" value="1"/>
</dbReference>
<dbReference type="HAMAP" id="MF_00228">
    <property type="entry name" value="Thz_kinase"/>
    <property type="match status" value="1"/>
</dbReference>
<dbReference type="InterPro" id="IPR000417">
    <property type="entry name" value="Hyethyz_kinase"/>
</dbReference>
<dbReference type="InterPro" id="IPR029056">
    <property type="entry name" value="Ribokinase-like"/>
</dbReference>
<dbReference type="NCBIfam" id="NF006830">
    <property type="entry name" value="PRK09355.1"/>
    <property type="match status" value="1"/>
</dbReference>
<dbReference type="NCBIfam" id="TIGR00694">
    <property type="entry name" value="thiM"/>
    <property type="match status" value="1"/>
</dbReference>
<dbReference type="Pfam" id="PF02110">
    <property type="entry name" value="HK"/>
    <property type="match status" value="1"/>
</dbReference>
<dbReference type="PIRSF" id="PIRSF000513">
    <property type="entry name" value="Thz_kinase"/>
    <property type="match status" value="1"/>
</dbReference>
<dbReference type="PRINTS" id="PR01099">
    <property type="entry name" value="HYETHTZKNASE"/>
</dbReference>
<dbReference type="SUPFAM" id="SSF53613">
    <property type="entry name" value="Ribokinase-like"/>
    <property type="match status" value="1"/>
</dbReference>
<sequence length="263" mass="28438">MNNLERLRQENPLVVCYTNDVVKNFTANGLLSIGASPAMSEAPEEAKEFYKVAGALLINIGTMTKANEQDILEIGKIANQQGTPIVFDPVAVGASSYRKAFCQKFLSEVKVSVIKGNASEILTLVDATTTMKGTDGKTDLDVVEIAKRAHEELNTAIVLTGKDDVVVQGGKVVKLSNGSPLLAKITGAGCLLGGIVASFLFREENPTLQVLEEAVSIYNIAAEIAEKDQQVNGPGTFLPKLLDQMYNIDFNTYQQQVKRQEVE</sequence>
<protein>
    <recommendedName>
        <fullName evidence="1">Hydroxyethylthiazole kinase</fullName>
        <ecNumber evidence="1">2.7.1.50</ecNumber>
    </recommendedName>
    <alternativeName>
        <fullName evidence="1">4-methyl-5-beta-hydroxyethylthiazole kinase</fullName>
        <shortName evidence="1">TH kinase</shortName>
        <shortName evidence="1">Thz kinase</shortName>
    </alternativeName>
</protein>
<name>THIM_STAHJ</name>
<comment type="function">
    <text evidence="1">Catalyzes the phosphorylation of the hydroxyl group of 4-methyl-5-beta-hydroxyethylthiazole (THZ).</text>
</comment>
<comment type="catalytic activity">
    <reaction evidence="1">
        <text>5-(2-hydroxyethyl)-4-methylthiazole + ATP = 4-methyl-5-(2-phosphooxyethyl)-thiazole + ADP + H(+)</text>
        <dbReference type="Rhea" id="RHEA:24212"/>
        <dbReference type="ChEBI" id="CHEBI:15378"/>
        <dbReference type="ChEBI" id="CHEBI:17957"/>
        <dbReference type="ChEBI" id="CHEBI:30616"/>
        <dbReference type="ChEBI" id="CHEBI:58296"/>
        <dbReference type="ChEBI" id="CHEBI:456216"/>
        <dbReference type="EC" id="2.7.1.50"/>
    </reaction>
</comment>
<comment type="cofactor">
    <cofactor evidence="1">
        <name>Mg(2+)</name>
        <dbReference type="ChEBI" id="CHEBI:18420"/>
    </cofactor>
</comment>
<comment type="pathway">
    <text evidence="1">Cofactor biosynthesis; thiamine diphosphate biosynthesis; 4-methyl-5-(2-phosphoethyl)-thiazole from 5-(2-hydroxyethyl)-4-methylthiazole: step 1/1.</text>
</comment>
<comment type="similarity">
    <text evidence="1">Belongs to the Thz kinase family.</text>
</comment>
<feature type="chain" id="PRO_1000021535" description="Hydroxyethylthiazole kinase">
    <location>
        <begin position="1"/>
        <end position="263"/>
    </location>
</feature>
<feature type="binding site" evidence="1">
    <location>
        <position position="39"/>
    </location>
    <ligand>
        <name>substrate</name>
    </ligand>
</feature>
<feature type="binding site" evidence="1">
    <location>
        <position position="115"/>
    </location>
    <ligand>
        <name>ATP</name>
        <dbReference type="ChEBI" id="CHEBI:30616"/>
    </ligand>
</feature>
<feature type="binding site" evidence="1">
    <location>
        <position position="160"/>
    </location>
    <ligand>
        <name>ATP</name>
        <dbReference type="ChEBI" id="CHEBI:30616"/>
    </ligand>
</feature>
<feature type="binding site" evidence="1">
    <location>
        <position position="187"/>
    </location>
    <ligand>
        <name>substrate</name>
    </ligand>
</feature>